<name>RLME_ACTSZ</name>
<comment type="function">
    <text evidence="1">Specifically methylates the uridine in position 2552 of 23S rRNA at the 2'-O position of the ribose in the fully assembled 50S ribosomal subunit.</text>
</comment>
<comment type="catalytic activity">
    <reaction evidence="1">
        <text>uridine(2552) in 23S rRNA + S-adenosyl-L-methionine = 2'-O-methyluridine(2552) in 23S rRNA + S-adenosyl-L-homocysteine + H(+)</text>
        <dbReference type="Rhea" id="RHEA:42720"/>
        <dbReference type="Rhea" id="RHEA-COMP:10202"/>
        <dbReference type="Rhea" id="RHEA-COMP:10203"/>
        <dbReference type="ChEBI" id="CHEBI:15378"/>
        <dbReference type="ChEBI" id="CHEBI:57856"/>
        <dbReference type="ChEBI" id="CHEBI:59789"/>
        <dbReference type="ChEBI" id="CHEBI:65315"/>
        <dbReference type="ChEBI" id="CHEBI:74478"/>
        <dbReference type="EC" id="2.1.1.166"/>
    </reaction>
</comment>
<comment type="subcellular location">
    <subcellularLocation>
        <location evidence="1">Cytoplasm</location>
    </subcellularLocation>
</comment>
<comment type="similarity">
    <text evidence="1">Belongs to the class I-like SAM-binding methyltransferase superfamily. RNA methyltransferase RlmE family.</text>
</comment>
<accession>A6VPC2</accession>
<organism>
    <name type="scientific">Actinobacillus succinogenes (strain ATCC 55618 / DSM 22257 / CCUG 43843 / 130Z)</name>
    <dbReference type="NCBI Taxonomy" id="339671"/>
    <lineage>
        <taxon>Bacteria</taxon>
        <taxon>Pseudomonadati</taxon>
        <taxon>Pseudomonadota</taxon>
        <taxon>Gammaproteobacteria</taxon>
        <taxon>Pasteurellales</taxon>
        <taxon>Pasteurellaceae</taxon>
        <taxon>Actinobacillus</taxon>
    </lineage>
</organism>
<feature type="chain" id="PRO_1000194974" description="Ribosomal RNA large subunit methyltransferase E">
    <location>
        <begin position="1"/>
        <end position="208"/>
    </location>
</feature>
<feature type="active site" description="Proton acceptor" evidence="1">
    <location>
        <position position="163"/>
    </location>
</feature>
<feature type="binding site" evidence="1">
    <location>
        <position position="62"/>
    </location>
    <ligand>
        <name>S-adenosyl-L-methionine</name>
        <dbReference type="ChEBI" id="CHEBI:59789"/>
    </ligand>
</feature>
<feature type="binding site" evidence="1">
    <location>
        <position position="64"/>
    </location>
    <ligand>
        <name>S-adenosyl-L-methionine</name>
        <dbReference type="ChEBI" id="CHEBI:59789"/>
    </ligand>
</feature>
<feature type="binding site" evidence="1">
    <location>
        <position position="82"/>
    </location>
    <ligand>
        <name>S-adenosyl-L-methionine</name>
        <dbReference type="ChEBI" id="CHEBI:59789"/>
    </ligand>
</feature>
<feature type="binding site" evidence="1">
    <location>
        <position position="98"/>
    </location>
    <ligand>
        <name>S-adenosyl-L-methionine</name>
        <dbReference type="ChEBI" id="CHEBI:59789"/>
    </ligand>
</feature>
<feature type="binding site" evidence="1">
    <location>
        <position position="123"/>
    </location>
    <ligand>
        <name>S-adenosyl-L-methionine</name>
        <dbReference type="ChEBI" id="CHEBI:59789"/>
    </ligand>
</feature>
<evidence type="ECO:0000255" key="1">
    <source>
        <dbReference type="HAMAP-Rule" id="MF_01547"/>
    </source>
</evidence>
<gene>
    <name evidence="1" type="primary">rlmE</name>
    <name evidence="1" type="synonym">ftsJ</name>
    <name evidence="1" type="synonym">rrmJ</name>
    <name type="ordered locus">Asuc_1460</name>
</gene>
<dbReference type="EC" id="2.1.1.166" evidence="1"/>
<dbReference type="EMBL" id="CP000746">
    <property type="protein sequence ID" value="ABR74819.1"/>
    <property type="molecule type" value="Genomic_DNA"/>
</dbReference>
<dbReference type="RefSeq" id="WP_012073196.1">
    <property type="nucleotide sequence ID" value="NC_009655.1"/>
</dbReference>
<dbReference type="SMR" id="A6VPC2"/>
<dbReference type="STRING" id="339671.Asuc_1460"/>
<dbReference type="KEGG" id="asu:Asuc_1460"/>
<dbReference type="eggNOG" id="COG0293">
    <property type="taxonomic scope" value="Bacteria"/>
</dbReference>
<dbReference type="HOGENOM" id="CLU_009422_4_0_6"/>
<dbReference type="OrthoDB" id="9790080at2"/>
<dbReference type="Proteomes" id="UP000001114">
    <property type="component" value="Chromosome"/>
</dbReference>
<dbReference type="GO" id="GO:0005737">
    <property type="term" value="C:cytoplasm"/>
    <property type="evidence" value="ECO:0007669"/>
    <property type="project" value="UniProtKB-SubCell"/>
</dbReference>
<dbReference type="GO" id="GO:0008650">
    <property type="term" value="F:rRNA (uridine-2'-O-)-methyltransferase activity"/>
    <property type="evidence" value="ECO:0007669"/>
    <property type="project" value="UniProtKB-UniRule"/>
</dbReference>
<dbReference type="FunFam" id="3.40.50.150:FF:000005">
    <property type="entry name" value="Ribosomal RNA large subunit methyltransferase E"/>
    <property type="match status" value="1"/>
</dbReference>
<dbReference type="Gene3D" id="3.40.50.150">
    <property type="entry name" value="Vaccinia Virus protein VP39"/>
    <property type="match status" value="1"/>
</dbReference>
<dbReference type="HAMAP" id="MF_01547">
    <property type="entry name" value="RNA_methyltr_E"/>
    <property type="match status" value="1"/>
</dbReference>
<dbReference type="InterPro" id="IPR050082">
    <property type="entry name" value="RNA_methyltr_RlmE"/>
</dbReference>
<dbReference type="InterPro" id="IPR002877">
    <property type="entry name" value="RNA_MeTrfase_FtsJ_dom"/>
</dbReference>
<dbReference type="InterPro" id="IPR015507">
    <property type="entry name" value="rRNA-MeTfrase_E"/>
</dbReference>
<dbReference type="InterPro" id="IPR004512">
    <property type="entry name" value="rRNA_MeTrfase_gammaproteobac"/>
</dbReference>
<dbReference type="InterPro" id="IPR029063">
    <property type="entry name" value="SAM-dependent_MTases_sf"/>
</dbReference>
<dbReference type="NCBIfam" id="NF008390">
    <property type="entry name" value="PRK11188.1"/>
    <property type="match status" value="1"/>
</dbReference>
<dbReference type="NCBIfam" id="TIGR00438">
    <property type="entry name" value="rrmJ"/>
    <property type="match status" value="1"/>
</dbReference>
<dbReference type="PANTHER" id="PTHR10920">
    <property type="entry name" value="RIBOSOMAL RNA METHYLTRANSFERASE"/>
    <property type="match status" value="1"/>
</dbReference>
<dbReference type="PANTHER" id="PTHR10920:SF18">
    <property type="entry name" value="RRNA METHYLTRANSFERASE 2, MITOCHONDRIAL"/>
    <property type="match status" value="1"/>
</dbReference>
<dbReference type="Pfam" id="PF01728">
    <property type="entry name" value="FtsJ"/>
    <property type="match status" value="1"/>
</dbReference>
<dbReference type="PIRSF" id="PIRSF005461">
    <property type="entry name" value="23S_rRNA_mtase"/>
    <property type="match status" value="1"/>
</dbReference>
<dbReference type="SUPFAM" id="SSF53335">
    <property type="entry name" value="S-adenosyl-L-methionine-dependent methyltransferases"/>
    <property type="match status" value="1"/>
</dbReference>
<keyword id="KW-0963">Cytoplasm</keyword>
<keyword id="KW-0489">Methyltransferase</keyword>
<keyword id="KW-1185">Reference proteome</keyword>
<keyword id="KW-0698">rRNA processing</keyword>
<keyword id="KW-0949">S-adenosyl-L-methionine</keyword>
<keyword id="KW-0808">Transferase</keyword>
<sequence length="208" mass="23463">MGRKRSASSSRWLNEHFKDPFVQKAHKQKLRSRAYFKLDEIQQTDRLFKPGMTVVDLGAAPGGWSQYAVTQIGSKGRIIACDILEMDPIVGVDFLQGDFRDENVLAALLERVGESKVDVVMSDMAPNFSGMPSVDIPRAMYLVELALDMCKQVLTANGSFVVKVFQGEGFDEYLREIRSLFKVVKVRKPEASRGRSREVYIVAIGYKY</sequence>
<protein>
    <recommendedName>
        <fullName evidence="1">Ribosomal RNA large subunit methyltransferase E</fullName>
        <ecNumber evidence="1">2.1.1.166</ecNumber>
    </recommendedName>
    <alternativeName>
        <fullName evidence="1">23S rRNA Um2552 methyltransferase</fullName>
    </alternativeName>
    <alternativeName>
        <fullName evidence="1">rRNA (uridine-2'-O-)-methyltransferase</fullName>
    </alternativeName>
</protein>
<proteinExistence type="inferred from homology"/>
<reference key="1">
    <citation type="journal article" date="2010" name="BMC Genomics">
        <title>A genomic perspective on the potential of Actinobacillus succinogenes for industrial succinate production.</title>
        <authorList>
            <person name="McKinlay J.B."/>
            <person name="Laivenieks M."/>
            <person name="Schindler B.D."/>
            <person name="McKinlay A.A."/>
            <person name="Siddaramappa S."/>
            <person name="Challacombe J.F."/>
            <person name="Lowry S.R."/>
            <person name="Clum A."/>
            <person name="Lapidus A.L."/>
            <person name="Burkhart K.B."/>
            <person name="Harkins V."/>
            <person name="Vieille C."/>
        </authorList>
    </citation>
    <scope>NUCLEOTIDE SEQUENCE [LARGE SCALE GENOMIC DNA]</scope>
    <source>
        <strain>ATCC 55618 / DSM 22257 / CCUG 43843 / 130Z</strain>
    </source>
</reference>